<gene>
    <name evidence="1" type="primary">dapE</name>
    <name type="ordered locus">Csal_0557</name>
</gene>
<protein>
    <recommendedName>
        <fullName evidence="1">Succinyl-diaminopimelate desuccinylase</fullName>
        <shortName evidence="1">SDAP desuccinylase</shortName>
        <ecNumber evidence="1">3.5.1.18</ecNumber>
    </recommendedName>
    <alternativeName>
        <fullName evidence="1">N-succinyl-LL-2,6-diaminoheptanedioate amidohydrolase</fullName>
    </alternativeName>
</protein>
<feature type="chain" id="PRO_0000375531" description="Succinyl-diaminopimelate desuccinylase">
    <location>
        <begin position="1"/>
        <end position="386"/>
    </location>
</feature>
<feature type="active site" evidence="1">
    <location>
        <position position="78"/>
    </location>
</feature>
<feature type="active site" description="Proton acceptor" evidence="1">
    <location>
        <position position="144"/>
    </location>
</feature>
<feature type="binding site" evidence="1">
    <location>
        <position position="76"/>
    </location>
    <ligand>
        <name>Zn(2+)</name>
        <dbReference type="ChEBI" id="CHEBI:29105"/>
        <label>1</label>
    </ligand>
</feature>
<feature type="binding site" evidence="1">
    <location>
        <position position="110"/>
    </location>
    <ligand>
        <name>Zn(2+)</name>
        <dbReference type="ChEBI" id="CHEBI:29105"/>
        <label>1</label>
    </ligand>
</feature>
<feature type="binding site" evidence="1">
    <location>
        <position position="110"/>
    </location>
    <ligand>
        <name>Zn(2+)</name>
        <dbReference type="ChEBI" id="CHEBI:29105"/>
        <label>2</label>
    </ligand>
</feature>
<feature type="binding site" evidence="1">
    <location>
        <position position="145"/>
    </location>
    <ligand>
        <name>Zn(2+)</name>
        <dbReference type="ChEBI" id="CHEBI:29105"/>
        <label>2</label>
    </ligand>
</feature>
<feature type="binding site" evidence="1">
    <location>
        <position position="173"/>
    </location>
    <ligand>
        <name>Zn(2+)</name>
        <dbReference type="ChEBI" id="CHEBI:29105"/>
        <label>1</label>
    </ligand>
</feature>
<feature type="binding site" evidence="1">
    <location>
        <position position="359"/>
    </location>
    <ligand>
        <name>Zn(2+)</name>
        <dbReference type="ChEBI" id="CHEBI:29105"/>
        <label>2</label>
    </ligand>
</feature>
<dbReference type="EC" id="3.5.1.18" evidence="1"/>
<dbReference type="EMBL" id="CP000285">
    <property type="protein sequence ID" value="ABE57919.1"/>
    <property type="molecule type" value="Genomic_DNA"/>
</dbReference>
<dbReference type="RefSeq" id="WP_011505865.1">
    <property type="nucleotide sequence ID" value="NC_007963.1"/>
</dbReference>
<dbReference type="SMR" id="Q1R039"/>
<dbReference type="STRING" id="290398.Csal_0557"/>
<dbReference type="GeneID" id="95333313"/>
<dbReference type="KEGG" id="csa:Csal_0557"/>
<dbReference type="eggNOG" id="COG0624">
    <property type="taxonomic scope" value="Bacteria"/>
</dbReference>
<dbReference type="HOGENOM" id="CLU_021802_4_0_6"/>
<dbReference type="OrthoDB" id="9809784at2"/>
<dbReference type="UniPathway" id="UPA00034">
    <property type="reaction ID" value="UER00021"/>
</dbReference>
<dbReference type="Proteomes" id="UP000000239">
    <property type="component" value="Chromosome"/>
</dbReference>
<dbReference type="GO" id="GO:0008777">
    <property type="term" value="F:acetylornithine deacetylase activity"/>
    <property type="evidence" value="ECO:0007669"/>
    <property type="project" value="TreeGrafter"/>
</dbReference>
<dbReference type="GO" id="GO:0050897">
    <property type="term" value="F:cobalt ion binding"/>
    <property type="evidence" value="ECO:0007669"/>
    <property type="project" value="UniProtKB-UniRule"/>
</dbReference>
<dbReference type="GO" id="GO:0009014">
    <property type="term" value="F:succinyl-diaminopimelate desuccinylase activity"/>
    <property type="evidence" value="ECO:0007669"/>
    <property type="project" value="UniProtKB-UniRule"/>
</dbReference>
<dbReference type="GO" id="GO:0008270">
    <property type="term" value="F:zinc ion binding"/>
    <property type="evidence" value="ECO:0007669"/>
    <property type="project" value="UniProtKB-UniRule"/>
</dbReference>
<dbReference type="GO" id="GO:0019877">
    <property type="term" value="P:diaminopimelate biosynthetic process"/>
    <property type="evidence" value="ECO:0007669"/>
    <property type="project" value="UniProtKB-UniRule"/>
</dbReference>
<dbReference type="GO" id="GO:0006526">
    <property type="term" value="P:L-arginine biosynthetic process"/>
    <property type="evidence" value="ECO:0007669"/>
    <property type="project" value="TreeGrafter"/>
</dbReference>
<dbReference type="GO" id="GO:0009089">
    <property type="term" value="P:lysine biosynthetic process via diaminopimelate"/>
    <property type="evidence" value="ECO:0007669"/>
    <property type="project" value="UniProtKB-UniRule"/>
</dbReference>
<dbReference type="CDD" id="cd03891">
    <property type="entry name" value="M20_DapE_proteobac"/>
    <property type="match status" value="1"/>
</dbReference>
<dbReference type="FunFam" id="3.40.630.10:FF:000005">
    <property type="entry name" value="Succinyl-diaminopimelate desuccinylase"/>
    <property type="match status" value="1"/>
</dbReference>
<dbReference type="Gene3D" id="3.40.630.10">
    <property type="entry name" value="Zn peptidases"/>
    <property type="match status" value="2"/>
</dbReference>
<dbReference type="HAMAP" id="MF_01690">
    <property type="entry name" value="DapE"/>
    <property type="match status" value="1"/>
</dbReference>
<dbReference type="InterPro" id="IPR001261">
    <property type="entry name" value="ArgE/DapE_CS"/>
</dbReference>
<dbReference type="InterPro" id="IPR036264">
    <property type="entry name" value="Bact_exopeptidase_dim_dom"/>
</dbReference>
<dbReference type="InterPro" id="IPR005941">
    <property type="entry name" value="DapE_proteobac"/>
</dbReference>
<dbReference type="InterPro" id="IPR002933">
    <property type="entry name" value="Peptidase_M20"/>
</dbReference>
<dbReference type="InterPro" id="IPR011650">
    <property type="entry name" value="Peptidase_M20_dimer"/>
</dbReference>
<dbReference type="InterPro" id="IPR050072">
    <property type="entry name" value="Peptidase_M20A"/>
</dbReference>
<dbReference type="NCBIfam" id="TIGR01246">
    <property type="entry name" value="dapE_proteo"/>
    <property type="match status" value="1"/>
</dbReference>
<dbReference type="NCBIfam" id="NF009557">
    <property type="entry name" value="PRK13009.1"/>
    <property type="match status" value="1"/>
</dbReference>
<dbReference type="PANTHER" id="PTHR43808">
    <property type="entry name" value="ACETYLORNITHINE DEACETYLASE"/>
    <property type="match status" value="1"/>
</dbReference>
<dbReference type="PANTHER" id="PTHR43808:SF31">
    <property type="entry name" value="N-ACETYL-L-CITRULLINE DEACETYLASE"/>
    <property type="match status" value="1"/>
</dbReference>
<dbReference type="Pfam" id="PF07687">
    <property type="entry name" value="M20_dimer"/>
    <property type="match status" value="1"/>
</dbReference>
<dbReference type="Pfam" id="PF01546">
    <property type="entry name" value="Peptidase_M20"/>
    <property type="match status" value="1"/>
</dbReference>
<dbReference type="SUPFAM" id="SSF55031">
    <property type="entry name" value="Bacterial exopeptidase dimerisation domain"/>
    <property type="match status" value="1"/>
</dbReference>
<dbReference type="SUPFAM" id="SSF53187">
    <property type="entry name" value="Zn-dependent exopeptidases"/>
    <property type="match status" value="1"/>
</dbReference>
<dbReference type="PROSITE" id="PS00759">
    <property type="entry name" value="ARGE_DAPE_CPG2_2"/>
    <property type="match status" value="1"/>
</dbReference>
<evidence type="ECO:0000255" key="1">
    <source>
        <dbReference type="HAMAP-Rule" id="MF_01690"/>
    </source>
</evidence>
<sequence>MPTTEADTTPASATLALAFDLLRRHSVTPNDAGCQALMIERLERLGFQVERLRIGEVDNFWATRGETGPLLVFAGHTDVVPTGPESDWQYPPFTPRIDADGMLCGRGAADMKGSLAAMVTAVETFIEAHPDHHGRLGFLITADEEGPAVHGTRAVVEHLREKGVAPDYCIVGEPSSSERLGDTLKNGRRGSLGGTLRVKGVQGHVAYPHLARNPVHEAAPALAALAEAQWDAGNAFFPATSFQISNLQAGTGASNVIPGQLEAVFNFRFSTEVTAEALKARTTEILDRFALDYTIDWTLNGEPFLTTEGALIDATVASVEDVLGYRPQLSTGGGTSDGRFIATLGAQVIELGPVNATIHKVDERIRAADLETLSRLYATIMQRLFT</sequence>
<name>DAPE_CHRSD</name>
<accession>Q1R039</accession>
<comment type="function">
    <text evidence="1">Catalyzes the hydrolysis of N-succinyl-L,L-diaminopimelic acid (SDAP), forming succinate and LL-2,6-diaminopimelate (DAP), an intermediate involved in the bacterial biosynthesis of lysine and meso-diaminopimelic acid, an essential component of bacterial cell walls.</text>
</comment>
<comment type="catalytic activity">
    <reaction evidence="1">
        <text>N-succinyl-(2S,6S)-2,6-diaminopimelate + H2O = (2S,6S)-2,6-diaminopimelate + succinate</text>
        <dbReference type="Rhea" id="RHEA:22608"/>
        <dbReference type="ChEBI" id="CHEBI:15377"/>
        <dbReference type="ChEBI" id="CHEBI:30031"/>
        <dbReference type="ChEBI" id="CHEBI:57609"/>
        <dbReference type="ChEBI" id="CHEBI:58087"/>
        <dbReference type="EC" id="3.5.1.18"/>
    </reaction>
</comment>
<comment type="cofactor">
    <cofactor evidence="1">
        <name>Zn(2+)</name>
        <dbReference type="ChEBI" id="CHEBI:29105"/>
    </cofactor>
    <cofactor evidence="1">
        <name>Co(2+)</name>
        <dbReference type="ChEBI" id="CHEBI:48828"/>
    </cofactor>
    <text evidence="1">Binds 2 Zn(2+) or Co(2+) ions per subunit.</text>
</comment>
<comment type="pathway">
    <text evidence="1">Amino-acid biosynthesis; L-lysine biosynthesis via DAP pathway; LL-2,6-diaminopimelate from (S)-tetrahydrodipicolinate (succinylase route): step 3/3.</text>
</comment>
<comment type="subunit">
    <text evidence="1">Homodimer.</text>
</comment>
<comment type="similarity">
    <text evidence="1">Belongs to the peptidase M20A family. DapE subfamily.</text>
</comment>
<organism>
    <name type="scientific">Chromohalobacter salexigens (strain ATCC BAA-138 / DSM 3043 / CIP 106854 / NCIMB 13768 / 1H11)</name>
    <dbReference type="NCBI Taxonomy" id="290398"/>
    <lineage>
        <taxon>Bacteria</taxon>
        <taxon>Pseudomonadati</taxon>
        <taxon>Pseudomonadota</taxon>
        <taxon>Gammaproteobacteria</taxon>
        <taxon>Oceanospirillales</taxon>
        <taxon>Halomonadaceae</taxon>
        <taxon>Chromohalobacter</taxon>
    </lineage>
</organism>
<proteinExistence type="inferred from homology"/>
<reference key="1">
    <citation type="journal article" date="2011" name="Stand. Genomic Sci.">
        <title>Complete genome sequence of the halophilic and highly halotolerant Chromohalobacter salexigens type strain (1H11(T)).</title>
        <authorList>
            <person name="Copeland A."/>
            <person name="O'Connor K."/>
            <person name="Lucas S."/>
            <person name="Lapidus A."/>
            <person name="Berry K.W."/>
            <person name="Detter J.C."/>
            <person name="Del Rio T.G."/>
            <person name="Hammon N."/>
            <person name="Dalin E."/>
            <person name="Tice H."/>
            <person name="Pitluck S."/>
            <person name="Bruce D."/>
            <person name="Goodwin L."/>
            <person name="Han C."/>
            <person name="Tapia R."/>
            <person name="Saunders E."/>
            <person name="Schmutz J."/>
            <person name="Brettin T."/>
            <person name="Larimer F."/>
            <person name="Land M."/>
            <person name="Hauser L."/>
            <person name="Vargas C."/>
            <person name="Nieto J.J."/>
            <person name="Kyrpides N.C."/>
            <person name="Ivanova N."/>
            <person name="Goker M."/>
            <person name="Klenk H.P."/>
            <person name="Csonka L.N."/>
            <person name="Woyke T."/>
        </authorList>
    </citation>
    <scope>NUCLEOTIDE SEQUENCE [LARGE SCALE GENOMIC DNA]</scope>
    <source>
        <strain>ATCC BAA-138 / DSM 3043 / CIP 106854 / NCIMB 13768 / 1H11</strain>
    </source>
</reference>
<keyword id="KW-0028">Amino-acid biosynthesis</keyword>
<keyword id="KW-0170">Cobalt</keyword>
<keyword id="KW-0220">Diaminopimelate biosynthesis</keyword>
<keyword id="KW-0378">Hydrolase</keyword>
<keyword id="KW-0457">Lysine biosynthesis</keyword>
<keyword id="KW-0479">Metal-binding</keyword>
<keyword id="KW-1185">Reference proteome</keyword>
<keyword id="KW-0862">Zinc</keyword>